<proteinExistence type="inferred from homology"/>
<sequence>MAISDLLNRRVRALPEEDEEIYSEESAFEEKSDDRRSGESDSDSDDLDDEALEETDDNSEHDGPVGLEDDEDSEDGEDNDNGEDDVQASLSSISFGALAKAQASLGPKGKRNAKTAKPTEESPQTTSPLDDIRARIREAREQKRQESGKSKDSAKPARTSKHAPMVQSSKRAVSRKRTVVEPPSVPKSRDPRFDPTVLSHGGRHNAESARKAYSFLDDYRSSELKELKAKFAKTKNAEEKEALKREIRSTSDRLRAMENRRREEEVLAEHKKREKQLIREGKKSNPYFLKKSDLKKQVMLKKYENMNSKERTKALERRRKKIASKERKEMPMERRLGSEGNDDGGRKRRRMA</sequence>
<feature type="chain" id="PRO_0000397619" description="rRNA biogenesis protein rrp36">
    <location>
        <begin position="1"/>
        <end position="352"/>
    </location>
</feature>
<feature type="region of interest" description="Disordered" evidence="3">
    <location>
        <begin position="1"/>
        <end position="207"/>
    </location>
</feature>
<feature type="region of interest" description="Disordered" evidence="3">
    <location>
        <begin position="304"/>
        <end position="352"/>
    </location>
</feature>
<feature type="coiled-coil region" evidence="2">
    <location>
        <begin position="221"/>
        <end position="280"/>
    </location>
</feature>
<feature type="compositionally biased region" description="Acidic residues" evidence="3">
    <location>
        <begin position="16"/>
        <end position="27"/>
    </location>
</feature>
<feature type="compositionally biased region" description="Basic and acidic residues" evidence="3">
    <location>
        <begin position="28"/>
        <end position="39"/>
    </location>
</feature>
<feature type="compositionally biased region" description="Acidic residues" evidence="3">
    <location>
        <begin position="40"/>
        <end position="57"/>
    </location>
</feature>
<feature type="compositionally biased region" description="Acidic residues" evidence="3">
    <location>
        <begin position="67"/>
        <end position="86"/>
    </location>
</feature>
<feature type="compositionally biased region" description="Basic and acidic residues" evidence="3">
    <location>
        <begin position="130"/>
        <end position="155"/>
    </location>
</feature>
<feature type="compositionally biased region" description="Basic and acidic residues" evidence="3">
    <location>
        <begin position="304"/>
        <end position="315"/>
    </location>
</feature>
<feature type="compositionally biased region" description="Basic and acidic residues" evidence="3">
    <location>
        <begin position="323"/>
        <end position="337"/>
    </location>
</feature>
<keyword id="KW-0175">Coiled coil</keyword>
<keyword id="KW-0539">Nucleus</keyword>
<keyword id="KW-1185">Reference proteome</keyword>
<keyword id="KW-0687">Ribonucleoprotein</keyword>
<keyword id="KW-0690">Ribosome biogenesis</keyword>
<keyword id="KW-0698">rRNA processing</keyword>
<evidence type="ECO:0000250" key="1"/>
<evidence type="ECO:0000255" key="2"/>
<evidence type="ECO:0000256" key="3">
    <source>
        <dbReference type="SAM" id="MobiDB-lite"/>
    </source>
</evidence>
<evidence type="ECO:0000305" key="4"/>
<accession>Q2U9C3</accession>
<gene>
    <name type="primary">rrp36</name>
    <name type="ORF">AO090701000087</name>
</gene>
<comment type="function">
    <text evidence="1">Component of the 90S pre-ribosome involved in the maturation of rRNAs. Required for early cleavages of the pre-RNAs in the 40S ribosomal subunit maturation pathway (By similarity).</text>
</comment>
<comment type="subunit">
    <text evidence="1">Associates with 90S and pre-40S pre-ribosomal particles.</text>
</comment>
<comment type="subcellular location">
    <subcellularLocation>
        <location evidence="1">Nucleus</location>
        <location evidence="1">Nucleolus</location>
    </subcellularLocation>
</comment>
<comment type="similarity">
    <text evidence="4">Belongs to the RRP36 family.</text>
</comment>
<protein>
    <recommendedName>
        <fullName>rRNA biogenesis protein rrp36</fullName>
    </recommendedName>
    <alternativeName>
        <fullName>Ribosomal RNA-processing protein 36</fullName>
    </alternativeName>
</protein>
<dbReference type="EMBL" id="BA000053">
    <property type="protein sequence ID" value="BAE61842.1"/>
    <property type="molecule type" value="Genomic_DNA"/>
</dbReference>
<dbReference type="RefSeq" id="XP_001822975.1">
    <property type="nucleotide sequence ID" value="XM_001822923.1"/>
</dbReference>
<dbReference type="SMR" id="Q2U9C3"/>
<dbReference type="STRING" id="510516.Q2U9C3"/>
<dbReference type="EnsemblFungi" id="BAE61842">
    <property type="protein sequence ID" value="BAE61842"/>
    <property type="gene ID" value="AO090701000087"/>
</dbReference>
<dbReference type="GeneID" id="5995032"/>
<dbReference type="KEGG" id="aor:AO090701000087"/>
<dbReference type="VEuPathDB" id="FungiDB:AO090701000087"/>
<dbReference type="HOGENOM" id="CLU_048802_0_0_1"/>
<dbReference type="OMA" id="ERKEMPW"/>
<dbReference type="OrthoDB" id="125916at5052"/>
<dbReference type="Proteomes" id="UP000006564">
    <property type="component" value="Chromosome 5"/>
</dbReference>
<dbReference type="GO" id="GO:0030686">
    <property type="term" value="C:90S preribosome"/>
    <property type="evidence" value="ECO:0007669"/>
    <property type="project" value="TreeGrafter"/>
</dbReference>
<dbReference type="GO" id="GO:0005730">
    <property type="term" value="C:nucleolus"/>
    <property type="evidence" value="ECO:0007669"/>
    <property type="project" value="UniProtKB-SubCell"/>
</dbReference>
<dbReference type="GO" id="GO:0000462">
    <property type="term" value="P:maturation of SSU-rRNA from tricistronic rRNA transcript (SSU-rRNA, 5.8S rRNA, LSU-rRNA)"/>
    <property type="evidence" value="ECO:0007669"/>
    <property type="project" value="TreeGrafter"/>
</dbReference>
<dbReference type="InterPro" id="IPR009292">
    <property type="entry name" value="RRP36"/>
</dbReference>
<dbReference type="PANTHER" id="PTHR21738">
    <property type="entry name" value="RIBOSOMAL RNA PROCESSING PROTEIN 36 HOMOLOG"/>
    <property type="match status" value="1"/>
</dbReference>
<dbReference type="PANTHER" id="PTHR21738:SF0">
    <property type="entry name" value="RIBOSOMAL RNA PROCESSING PROTEIN 36 HOMOLOG"/>
    <property type="match status" value="1"/>
</dbReference>
<dbReference type="Pfam" id="PF06102">
    <property type="entry name" value="RRP36"/>
    <property type="match status" value="1"/>
</dbReference>
<reference key="1">
    <citation type="journal article" date="2005" name="Nature">
        <title>Genome sequencing and analysis of Aspergillus oryzae.</title>
        <authorList>
            <person name="Machida M."/>
            <person name="Asai K."/>
            <person name="Sano M."/>
            <person name="Tanaka T."/>
            <person name="Kumagai T."/>
            <person name="Terai G."/>
            <person name="Kusumoto K."/>
            <person name="Arima T."/>
            <person name="Akita O."/>
            <person name="Kashiwagi Y."/>
            <person name="Abe K."/>
            <person name="Gomi K."/>
            <person name="Horiuchi H."/>
            <person name="Kitamoto K."/>
            <person name="Kobayashi T."/>
            <person name="Takeuchi M."/>
            <person name="Denning D.W."/>
            <person name="Galagan J.E."/>
            <person name="Nierman W.C."/>
            <person name="Yu J."/>
            <person name="Archer D.B."/>
            <person name="Bennett J.W."/>
            <person name="Bhatnagar D."/>
            <person name="Cleveland T.E."/>
            <person name="Fedorova N.D."/>
            <person name="Gotoh O."/>
            <person name="Horikawa H."/>
            <person name="Hosoyama A."/>
            <person name="Ichinomiya M."/>
            <person name="Igarashi R."/>
            <person name="Iwashita K."/>
            <person name="Juvvadi P.R."/>
            <person name="Kato M."/>
            <person name="Kato Y."/>
            <person name="Kin T."/>
            <person name="Kokubun A."/>
            <person name="Maeda H."/>
            <person name="Maeyama N."/>
            <person name="Maruyama J."/>
            <person name="Nagasaki H."/>
            <person name="Nakajima T."/>
            <person name="Oda K."/>
            <person name="Okada K."/>
            <person name="Paulsen I."/>
            <person name="Sakamoto K."/>
            <person name="Sawano T."/>
            <person name="Takahashi M."/>
            <person name="Takase K."/>
            <person name="Terabayashi Y."/>
            <person name="Wortman J.R."/>
            <person name="Yamada O."/>
            <person name="Yamagata Y."/>
            <person name="Anazawa H."/>
            <person name="Hata Y."/>
            <person name="Koide Y."/>
            <person name="Komori T."/>
            <person name="Koyama Y."/>
            <person name="Minetoki T."/>
            <person name="Suharnan S."/>
            <person name="Tanaka A."/>
            <person name="Isono K."/>
            <person name="Kuhara S."/>
            <person name="Ogasawara N."/>
            <person name="Kikuchi H."/>
        </authorList>
    </citation>
    <scope>NUCLEOTIDE SEQUENCE [LARGE SCALE GENOMIC DNA]</scope>
    <source>
        <strain>ATCC 42149 / RIB 40</strain>
    </source>
</reference>
<organism>
    <name type="scientific">Aspergillus oryzae (strain ATCC 42149 / RIB 40)</name>
    <name type="common">Yellow koji mold</name>
    <dbReference type="NCBI Taxonomy" id="510516"/>
    <lineage>
        <taxon>Eukaryota</taxon>
        <taxon>Fungi</taxon>
        <taxon>Dikarya</taxon>
        <taxon>Ascomycota</taxon>
        <taxon>Pezizomycotina</taxon>
        <taxon>Eurotiomycetes</taxon>
        <taxon>Eurotiomycetidae</taxon>
        <taxon>Eurotiales</taxon>
        <taxon>Aspergillaceae</taxon>
        <taxon>Aspergillus</taxon>
        <taxon>Aspergillus subgen. Circumdati</taxon>
    </lineage>
</organism>
<name>RRP36_ASPOR</name>